<comment type="function">
    <text evidence="1">Catalyzes the dephosphorylation of undecaprenyl diphosphate (UPP). Confers resistance to bacitracin.</text>
</comment>
<comment type="catalytic activity">
    <reaction evidence="1">
        <text>di-trans,octa-cis-undecaprenyl diphosphate + H2O = di-trans,octa-cis-undecaprenyl phosphate + phosphate + H(+)</text>
        <dbReference type="Rhea" id="RHEA:28094"/>
        <dbReference type="ChEBI" id="CHEBI:15377"/>
        <dbReference type="ChEBI" id="CHEBI:15378"/>
        <dbReference type="ChEBI" id="CHEBI:43474"/>
        <dbReference type="ChEBI" id="CHEBI:58405"/>
        <dbReference type="ChEBI" id="CHEBI:60392"/>
        <dbReference type="EC" id="3.6.1.27"/>
    </reaction>
</comment>
<comment type="subcellular location">
    <subcellularLocation>
        <location evidence="1">Cell membrane</location>
        <topology evidence="1">Multi-pass membrane protein</topology>
    </subcellularLocation>
</comment>
<comment type="miscellaneous">
    <text>Bacitracin is thought to be involved in the inhibition of peptidoglycan synthesis by sequestering undecaprenyl diphosphate, thereby reducing the pool of lipid carrier available.</text>
</comment>
<comment type="similarity">
    <text evidence="1">Belongs to the UppP family.</text>
</comment>
<feature type="chain" id="PRO_0000290699" description="Undecaprenyl-diphosphatase 2">
    <location>
        <begin position="1"/>
        <end position="284"/>
    </location>
</feature>
<feature type="transmembrane region" description="Helical" evidence="1">
    <location>
        <begin position="6"/>
        <end position="26"/>
    </location>
</feature>
<feature type="transmembrane region" description="Helical" evidence="1">
    <location>
        <begin position="46"/>
        <end position="66"/>
    </location>
</feature>
<feature type="transmembrane region" description="Helical" evidence="1">
    <location>
        <begin position="94"/>
        <end position="114"/>
    </location>
</feature>
<feature type="transmembrane region" description="Helical" evidence="1">
    <location>
        <begin position="119"/>
        <end position="139"/>
    </location>
</feature>
<feature type="transmembrane region" description="Helical" evidence="1">
    <location>
        <begin position="183"/>
        <end position="203"/>
    </location>
</feature>
<feature type="transmembrane region" description="Helical" evidence="1">
    <location>
        <begin position="227"/>
        <end position="247"/>
    </location>
</feature>
<feature type="transmembrane region" description="Helical" evidence="1">
    <location>
        <begin position="262"/>
        <end position="282"/>
    </location>
</feature>
<proteinExistence type="inferred from homology"/>
<dbReference type="EC" id="3.6.1.27" evidence="1"/>
<dbReference type="EMBL" id="AM180355">
    <property type="protein sequence ID" value="CAJ69880.1"/>
    <property type="molecule type" value="Genomic_DNA"/>
</dbReference>
<dbReference type="RefSeq" id="YP_001089504.1">
    <property type="nucleotide sequence ID" value="NC_009089.1"/>
</dbReference>
<dbReference type="SMR" id="Q184H7"/>
<dbReference type="STRING" id="272563.CD630_29860"/>
<dbReference type="EnsemblBacteria" id="CAJ69880">
    <property type="protein sequence ID" value="CAJ69880"/>
    <property type="gene ID" value="CD630_29860"/>
</dbReference>
<dbReference type="KEGG" id="cdf:CD630_29860"/>
<dbReference type="PATRIC" id="fig|272563.8.peg.3130"/>
<dbReference type="eggNOG" id="COG1968">
    <property type="taxonomic scope" value="Bacteria"/>
</dbReference>
<dbReference type="OrthoDB" id="9808289at2"/>
<dbReference type="PhylomeDB" id="Q184H7"/>
<dbReference type="BioCyc" id="PDIF272563:G12WB-3151-MONOMER"/>
<dbReference type="Proteomes" id="UP000001978">
    <property type="component" value="Chromosome"/>
</dbReference>
<dbReference type="GO" id="GO:0005886">
    <property type="term" value="C:plasma membrane"/>
    <property type="evidence" value="ECO:0007669"/>
    <property type="project" value="UniProtKB-SubCell"/>
</dbReference>
<dbReference type="GO" id="GO:0050380">
    <property type="term" value="F:undecaprenyl-diphosphatase activity"/>
    <property type="evidence" value="ECO:0007669"/>
    <property type="project" value="UniProtKB-UniRule"/>
</dbReference>
<dbReference type="GO" id="GO:0071555">
    <property type="term" value="P:cell wall organization"/>
    <property type="evidence" value="ECO:0007669"/>
    <property type="project" value="UniProtKB-KW"/>
</dbReference>
<dbReference type="GO" id="GO:0009252">
    <property type="term" value="P:peptidoglycan biosynthetic process"/>
    <property type="evidence" value="ECO:0007669"/>
    <property type="project" value="UniProtKB-KW"/>
</dbReference>
<dbReference type="GO" id="GO:0008360">
    <property type="term" value="P:regulation of cell shape"/>
    <property type="evidence" value="ECO:0007669"/>
    <property type="project" value="UniProtKB-KW"/>
</dbReference>
<dbReference type="GO" id="GO:0046677">
    <property type="term" value="P:response to antibiotic"/>
    <property type="evidence" value="ECO:0007669"/>
    <property type="project" value="UniProtKB-UniRule"/>
</dbReference>
<dbReference type="HAMAP" id="MF_01006">
    <property type="entry name" value="Undec_diphosphatase"/>
    <property type="match status" value="1"/>
</dbReference>
<dbReference type="InterPro" id="IPR003824">
    <property type="entry name" value="UppP"/>
</dbReference>
<dbReference type="NCBIfam" id="NF001390">
    <property type="entry name" value="PRK00281.1-4"/>
    <property type="match status" value="1"/>
</dbReference>
<dbReference type="NCBIfam" id="TIGR00753">
    <property type="entry name" value="undec_PP_bacA"/>
    <property type="match status" value="1"/>
</dbReference>
<dbReference type="PANTHER" id="PTHR30622">
    <property type="entry name" value="UNDECAPRENYL-DIPHOSPHATASE"/>
    <property type="match status" value="1"/>
</dbReference>
<dbReference type="PANTHER" id="PTHR30622:SF3">
    <property type="entry name" value="UNDECAPRENYL-DIPHOSPHATASE"/>
    <property type="match status" value="1"/>
</dbReference>
<dbReference type="Pfam" id="PF02673">
    <property type="entry name" value="BacA"/>
    <property type="match status" value="1"/>
</dbReference>
<organism>
    <name type="scientific">Clostridioides difficile (strain 630)</name>
    <name type="common">Peptoclostridium difficile</name>
    <dbReference type="NCBI Taxonomy" id="272563"/>
    <lineage>
        <taxon>Bacteria</taxon>
        <taxon>Bacillati</taxon>
        <taxon>Bacillota</taxon>
        <taxon>Clostridia</taxon>
        <taxon>Peptostreptococcales</taxon>
        <taxon>Peptostreptococcaceae</taxon>
        <taxon>Clostridioides</taxon>
    </lineage>
</organism>
<accession>Q184H7</accession>
<sequence length="284" mass="31243">MMSLDVIFILKSVIIAIVEGLTEFIPVSSTGHMILVGNLIDFKGQFAEMFEVVIQLGAILAVVVLYWKKIKDSVIEFFKFIFTGGKEGKIGFRFGMNVIIGCIPFAIIGVLFYDNIKSLFNLQSVIIGFIVGGILLLVVETLFRKKNHSTDNIDKITPIQALKVGTLQVLSAWPGMSRSASTIMGGWIAGLNSPTAAEFSFFLAVPAMVASSGKDLFEFDYSIMTPTLWIALVVGFIVAFIVSIIVMEKFVNFLKKKPMRVFAVYRIIMGVVLAVLAFTNIISV</sequence>
<protein>
    <recommendedName>
        <fullName evidence="1">Undecaprenyl-diphosphatase 2</fullName>
        <ecNumber evidence="1">3.6.1.27</ecNumber>
    </recommendedName>
    <alternativeName>
        <fullName evidence="1">Bacitracin resistance protein 2</fullName>
    </alternativeName>
    <alternativeName>
        <fullName evidence="1">Undecaprenyl pyrophosphate phosphatase 2</fullName>
    </alternativeName>
</protein>
<reference key="1">
    <citation type="journal article" date="2006" name="Nat. Genet.">
        <title>The multidrug-resistant human pathogen Clostridium difficile has a highly mobile, mosaic genome.</title>
        <authorList>
            <person name="Sebaihia M."/>
            <person name="Wren B.W."/>
            <person name="Mullany P."/>
            <person name="Fairweather N.F."/>
            <person name="Minton N."/>
            <person name="Stabler R."/>
            <person name="Thomson N.R."/>
            <person name="Roberts A.P."/>
            <person name="Cerdeno-Tarraga A.M."/>
            <person name="Wang H."/>
            <person name="Holden M.T.G."/>
            <person name="Wright A."/>
            <person name="Churcher C."/>
            <person name="Quail M.A."/>
            <person name="Baker S."/>
            <person name="Bason N."/>
            <person name="Brooks K."/>
            <person name="Chillingworth T."/>
            <person name="Cronin A."/>
            <person name="Davis P."/>
            <person name="Dowd L."/>
            <person name="Fraser A."/>
            <person name="Feltwell T."/>
            <person name="Hance Z."/>
            <person name="Holroyd S."/>
            <person name="Jagels K."/>
            <person name="Moule S."/>
            <person name="Mungall K."/>
            <person name="Price C."/>
            <person name="Rabbinowitsch E."/>
            <person name="Sharp S."/>
            <person name="Simmonds M."/>
            <person name="Stevens K."/>
            <person name="Unwin L."/>
            <person name="Whithead S."/>
            <person name="Dupuy B."/>
            <person name="Dougan G."/>
            <person name="Barrell B."/>
            <person name="Parkhill J."/>
        </authorList>
    </citation>
    <scope>NUCLEOTIDE SEQUENCE [LARGE SCALE GENOMIC DNA]</scope>
    <source>
        <strain>630</strain>
    </source>
</reference>
<name>UPPP2_CLOD6</name>
<gene>
    <name evidence="1" type="primary">uppP2</name>
    <name type="synonym">bacA2</name>
    <name type="synonym">upk2</name>
    <name type="ordered locus">CD630_29860</name>
</gene>
<keyword id="KW-0046">Antibiotic resistance</keyword>
<keyword id="KW-1003">Cell membrane</keyword>
<keyword id="KW-0133">Cell shape</keyword>
<keyword id="KW-0961">Cell wall biogenesis/degradation</keyword>
<keyword id="KW-0378">Hydrolase</keyword>
<keyword id="KW-0472">Membrane</keyword>
<keyword id="KW-0573">Peptidoglycan synthesis</keyword>
<keyword id="KW-1185">Reference proteome</keyword>
<keyword id="KW-0812">Transmembrane</keyword>
<keyword id="KW-1133">Transmembrane helix</keyword>
<evidence type="ECO:0000255" key="1">
    <source>
        <dbReference type="HAMAP-Rule" id="MF_01006"/>
    </source>
</evidence>